<organism>
    <name type="scientific">Danio rerio</name>
    <name type="common">Zebrafish</name>
    <name type="synonym">Brachydanio rerio</name>
    <dbReference type="NCBI Taxonomy" id="7955"/>
    <lineage>
        <taxon>Eukaryota</taxon>
        <taxon>Metazoa</taxon>
        <taxon>Chordata</taxon>
        <taxon>Craniata</taxon>
        <taxon>Vertebrata</taxon>
        <taxon>Euteleostomi</taxon>
        <taxon>Actinopterygii</taxon>
        <taxon>Neopterygii</taxon>
        <taxon>Teleostei</taxon>
        <taxon>Ostariophysi</taxon>
        <taxon>Cypriniformes</taxon>
        <taxon>Danionidae</taxon>
        <taxon>Danioninae</taxon>
        <taxon>Danio</taxon>
    </lineage>
</organism>
<keyword id="KW-0472">Membrane</keyword>
<keyword id="KW-1185">Reference proteome</keyword>
<keyword id="KW-0812">Transmembrane</keyword>
<keyword id="KW-1133">Transmembrane helix</keyword>
<comment type="function">
    <text evidence="1">Regulates the trafficking and gating properties of AMPA-selective glutamate receptors (AMPARs).</text>
</comment>
<comment type="subcellular location">
    <subcellularLocation>
        <location evidence="3">Membrane</location>
        <topology evidence="3">Multi-pass membrane protein</topology>
    </subcellularLocation>
</comment>
<comment type="similarity">
    <text evidence="3">Belongs to the cornichon family.</text>
</comment>
<reference key="1">
    <citation type="submission" date="2005-03" db="EMBL/GenBank/DDBJ databases">
        <authorList>
            <consortium name="NIH - Zebrafish Gene Collection (ZGC) project"/>
        </authorList>
    </citation>
    <scope>NUCLEOTIDE SEQUENCE [LARGE SCALE MRNA]</scope>
    <source>
        <tissue>Larva</tissue>
    </source>
</reference>
<dbReference type="EMBL" id="BC090830">
    <property type="protein sequence ID" value="AAH90830.1"/>
    <property type="molecule type" value="mRNA"/>
</dbReference>
<dbReference type="RefSeq" id="NP_001013542.1">
    <property type="nucleotide sequence ID" value="NM_001013524.1"/>
</dbReference>
<dbReference type="RefSeq" id="XP_005155427.1">
    <property type="nucleotide sequence ID" value="XM_005155370.3"/>
</dbReference>
<dbReference type="RefSeq" id="XP_021334846.1">
    <property type="nucleotide sequence ID" value="XM_021479171.2"/>
</dbReference>
<dbReference type="RefSeq" id="XP_021334847.1">
    <property type="nucleotide sequence ID" value="XM_021479172.2"/>
</dbReference>
<dbReference type="SMR" id="Q5BL21"/>
<dbReference type="FunCoup" id="Q5BL21">
    <property type="interactions" value="636"/>
</dbReference>
<dbReference type="STRING" id="7955.ENSDARP00000115028"/>
<dbReference type="PaxDb" id="7955-ENSDARP00000115028"/>
<dbReference type="Ensembl" id="ENSDART00000041841">
    <property type="protein sequence ID" value="ENSDARP00000041840"/>
    <property type="gene ID" value="ENSDARG00000043662"/>
</dbReference>
<dbReference type="Ensembl" id="ENSDART00000143451">
    <property type="protein sequence ID" value="ENSDARP00000115028"/>
    <property type="gene ID" value="ENSDARG00000043662"/>
</dbReference>
<dbReference type="GeneID" id="541397"/>
<dbReference type="KEGG" id="dre:541397"/>
<dbReference type="AGR" id="ZFIN:ZDB-GENE-050320-96"/>
<dbReference type="CTD" id="254263"/>
<dbReference type="ZFIN" id="ZDB-GENE-050320-96">
    <property type="gene designation" value="cnih2"/>
</dbReference>
<dbReference type="eggNOG" id="KOG2729">
    <property type="taxonomic scope" value="Eukaryota"/>
</dbReference>
<dbReference type="HOGENOM" id="CLU_112942_1_0_1"/>
<dbReference type="InParanoid" id="Q5BL21"/>
<dbReference type="OMA" id="YTVICVD"/>
<dbReference type="OrthoDB" id="434393at2759"/>
<dbReference type="PhylomeDB" id="Q5BL21"/>
<dbReference type="TreeFam" id="TF300083"/>
<dbReference type="Reactome" id="R-DRE-204005">
    <property type="pathway name" value="COPII-mediated vesicle transport"/>
</dbReference>
<dbReference type="Reactome" id="R-DRE-5694530">
    <property type="pathway name" value="Cargo concentration in the ER"/>
</dbReference>
<dbReference type="PRO" id="PR:Q5BL21"/>
<dbReference type="Proteomes" id="UP000000437">
    <property type="component" value="Alternate scaffold 10"/>
</dbReference>
<dbReference type="Proteomes" id="UP000000437">
    <property type="component" value="Chromosome 10"/>
</dbReference>
<dbReference type="Bgee" id="ENSDARG00000043662">
    <property type="expression patterns" value="Expressed in brain and 9 other cell types or tissues"/>
</dbReference>
<dbReference type="GO" id="GO:0030425">
    <property type="term" value="C:dendrite"/>
    <property type="evidence" value="ECO:0000318"/>
    <property type="project" value="GO_Central"/>
</dbReference>
<dbReference type="GO" id="GO:0016020">
    <property type="term" value="C:membrane"/>
    <property type="evidence" value="ECO:0007669"/>
    <property type="project" value="UniProtKB-SubCell"/>
</dbReference>
<dbReference type="GO" id="GO:0045202">
    <property type="term" value="C:synapse"/>
    <property type="evidence" value="ECO:0000318"/>
    <property type="project" value="GO_Central"/>
</dbReference>
<dbReference type="GO" id="GO:0005102">
    <property type="term" value="F:signaling receptor binding"/>
    <property type="evidence" value="ECO:0000318"/>
    <property type="project" value="GO_Central"/>
</dbReference>
<dbReference type="GO" id="GO:0035249">
    <property type="term" value="P:synaptic transmission, glutamatergic"/>
    <property type="evidence" value="ECO:0000318"/>
    <property type="project" value="GO_Central"/>
</dbReference>
<dbReference type="GO" id="GO:0016192">
    <property type="term" value="P:vesicle-mediated transport"/>
    <property type="evidence" value="ECO:0007669"/>
    <property type="project" value="InterPro"/>
</dbReference>
<dbReference type="InterPro" id="IPR003377">
    <property type="entry name" value="Cornichon"/>
</dbReference>
<dbReference type="InterPro" id="IPR033466">
    <property type="entry name" value="Cornichon_conserved"/>
</dbReference>
<dbReference type="PANTHER" id="PTHR12290">
    <property type="entry name" value="CORNICHON-RELATED"/>
    <property type="match status" value="1"/>
</dbReference>
<dbReference type="Pfam" id="PF03311">
    <property type="entry name" value="Cornichon"/>
    <property type="match status" value="2"/>
</dbReference>
<dbReference type="SMART" id="SM01398">
    <property type="entry name" value="Cornichon"/>
    <property type="match status" value="1"/>
</dbReference>
<dbReference type="PROSITE" id="PS01340">
    <property type="entry name" value="CORNICHON"/>
    <property type="match status" value="1"/>
</dbReference>
<gene>
    <name type="primary">cnih2</name>
    <name type="ORF">zgc:101874</name>
</gene>
<feature type="chain" id="PRO_0000408975" description="Protein cornichon homolog 2">
    <location>
        <begin position="1"/>
        <end position="160"/>
    </location>
</feature>
<feature type="topological domain" description="Cytoplasmic" evidence="2">
    <location>
        <begin position="1"/>
        <end position="10"/>
    </location>
</feature>
<feature type="transmembrane region" description="Helical" evidence="2">
    <location>
        <begin position="11"/>
        <end position="31"/>
    </location>
</feature>
<feature type="topological domain" description="Lumenal" evidence="2">
    <location>
        <begin position="32"/>
        <end position="72"/>
    </location>
</feature>
<feature type="transmembrane region" description="Helical" evidence="2">
    <location>
        <begin position="73"/>
        <end position="93"/>
    </location>
</feature>
<feature type="topological domain" description="Cytoplasmic" evidence="2">
    <location>
        <begin position="94"/>
        <end position="138"/>
    </location>
</feature>
<feature type="transmembrane region" description="Helical" evidence="2">
    <location>
        <begin position="139"/>
        <end position="159"/>
    </location>
</feature>
<feature type="topological domain" description="Lumenal" evidence="2">
    <location>
        <position position="160"/>
    </location>
</feature>
<protein>
    <recommendedName>
        <fullName>Protein cornichon homolog 2</fullName>
        <shortName>CNIH-2</shortName>
    </recommendedName>
    <alternativeName>
        <fullName>Cornichon family AMPA receptor auxiliary protein 2</fullName>
    </alternativeName>
</protein>
<evidence type="ECO:0000250" key="1"/>
<evidence type="ECO:0000255" key="2"/>
<evidence type="ECO:0000305" key="3"/>
<accession>Q5BL21</accession>
<name>CNIH2_DANRE</name>
<proteinExistence type="evidence at transcript level"/>
<sequence>MAFTFAAFCYMLTLVLCAALIFFVIWQIIAFDELRTDFKNPIDQSNPTRARERILNIERICNLLRRLVVPEYSIHGLFCLMFMCAGEWVTLGLNIPLLLYHLWRFFHRPADGSEVMYDPVSVMNADILNYCQKESWCKLGFYLLSFFYYLYSMVYALVSF</sequence>